<accession>Q8FFK0</accession>
<comment type="function">
    <text evidence="1">NDH-1 shuttles electrons from NADH, via FMN and iron-sulfur (Fe-S) centers, to quinones in the respiratory chain. The immediate electron acceptor for the enzyme in this species is believed to be ubiquinone. Couples the redox reaction to proton translocation (for every two electrons transferred, four hydrogen ions are translocated across the cytoplasmic membrane), and thus conserves the redox energy in a proton gradient. This subunit may bind ubiquinone.</text>
</comment>
<comment type="catalytic activity">
    <reaction evidence="1">
        <text>a quinone + NADH + 5 H(+)(in) = a quinol + NAD(+) + 4 H(+)(out)</text>
        <dbReference type="Rhea" id="RHEA:57888"/>
        <dbReference type="ChEBI" id="CHEBI:15378"/>
        <dbReference type="ChEBI" id="CHEBI:24646"/>
        <dbReference type="ChEBI" id="CHEBI:57540"/>
        <dbReference type="ChEBI" id="CHEBI:57945"/>
        <dbReference type="ChEBI" id="CHEBI:132124"/>
    </reaction>
</comment>
<comment type="subunit">
    <text evidence="1">NDH-1 is composed of 13 different subunits. Subunits NuoA, H, J, K, L, M, N constitute the membrane sector of the complex.</text>
</comment>
<comment type="subcellular location">
    <subcellularLocation>
        <location evidence="1">Cell inner membrane</location>
        <topology evidence="1">Multi-pass membrane protein</topology>
    </subcellularLocation>
</comment>
<comment type="similarity">
    <text evidence="1">Belongs to the complex I subunit 1 family.</text>
</comment>
<keyword id="KW-0997">Cell inner membrane</keyword>
<keyword id="KW-1003">Cell membrane</keyword>
<keyword id="KW-0472">Membrane</keyword>
<keyword id="KW-0520">NAD</keyword>
<keyword id="KW-0874">Quinone</keyword>
<keyword id="KW-1185">Reference proteome</keyword>
<keyword id="KW-1278">Translocase</keyword>
<keyword id="KW-0812">Transmembrane</keyword>
<keyword id="KW-1133">Transmembrane helix</keyword>
<keyword id="KW-0830">Ubiquinone</keyword>
<name>NUOH_ECOL6</name>
<organism>
    <name type="scientific">Escherichia coli O6:H1 (strain CFT073 / ATCC 700928 / UPEC)</name>
    <dbReference type="NCBI Taxonomy" id="199310"/>
    <lineage>
        <taxon>Bacteria</taxon>
        <taxon>Pseudomonadati</taxon>
        <taxon>Pseudomonadota</taxon>
        <taxon>Gammaproteobacteria</taxon>
        <taxon>Enterobacterales</taxon>
        <taxon>Enterobacteriaceae</taxon>
        <taxon>Escherichia</taxon>
    </lineage>
</organism>
<evidence type="ECO:0000255" key="1">
    <source>
        <dbReference type="HAMAP-Rule" id="MF_01350"/>
    </source>
</evidence>
<protein>
    <recommendedName>
        <fullName evidence="1">NADH-quinone oxidoreductase subunit H</fullName>
        <ecNumber evidence="1">7.1.1.-</ecNumber>
    </recommendedName>
    <alternativeName>
        <fullName evidence="1">NADH dehydrogenase I subunit H</fullName>
    </alternativeName>
    <alternativeName>
        <fullName evidence="1">NDH-1 subunit H</fullName>
    </alternativeName>
    <alternativeName>
        <fullName>NUO8</fullName>
    </alternativeName>
</protein>
<feature type="chain" id="PRO_0000244918" description="NADH-quinone oxidoreductase subunit H">
    <location>
        <begin position="1"/>
        <end position="325"/>
    </location>
</feature>
<feature type="transmembrane region" description="Helical" evidence="1">
    <location>
        <begin position="11"/>
        <end position="31"/>
    </location>
</feature>
<feature type="transmembrane region" description="Helical" evidence="1">
    <location>
        <begin position="81"/>
        <end position="101"/>
    </location>
</feature>
<feature type="transmembrane region" description="Helical" evidence="1">
    <location>
        <begin position="114"/>
        <end position="134"/>
    </location>
</feature>
<feature type="transmembrane region" description="Helical" evidence="1">
    <location>
        <begin position="154"/>
        <end position="174"/>
    </location>
</feature>
<feature type="transmembrane region" description="Helical" evidence="1">
    <location>
        <begin position="186"/>
        <end position="206"/>
    </location>
</feature>
<feature type="transmembrane region" description="Helical" evidence="1">
    <location>
        <begin position="237"/>
        <end position="257"/>
    </location>
</feature>
<feature type="transmembrane region" description="Helical" evidence="1">
    <location>
        <begin position="265"/>
        <end position="285"/>
    </location>
</feature>
<feature type="transmembrane region" description="Helical" evidence="1">
    <location>
        <begin position="304"/>
        <end position="324"/>
    </location>
</feature>
<gene>
    <name evidence="1" type="primary">nuoH</name>
    <name type="ordered locus">c2823</name>
</gene>
<reference key="1">
    <citation type="journal article" date="2002" name="Proc. Natl. Acad. Sci. U.S.A.">
        <title>Extensive mosaic structure revealed by the complete genome sequence of uropathogenic Escherichia coli.</title>
        <authorList>
            <person name="Welch R.A."/>
            <person name="Burland V."/>
            <person name="Plunkett G. III"/>
            <person name="Redford P."/>
            <person name="Roesch P."/>
            <person name="Rasko D."/>
            <person name="Buckles E.L."/>
            <person name="Liou S.-R."/>
            <person name="Boutin A."/>
            <person name="Hackett J."/>
            <person name="Stroud D."/>
            <person name="Mayhew G.F."/>
            <person name="Rose D.J."/>
            <person name="Zhou S."/>
            <person name="Schwartz D.C."/>
            <person name="Perna N.T."/>
            <person name="Mobley H.L.T."/>
            <person name="Donnenberg M.S."/>
            <person name="Blattner F.R."/>
        </authorList>
    </citation>
    <scope>NUCLEOTIDE SEQUENCE [LARGE SCALE GENOMIC DNA]</scope>
    <source>
        <strain>CFT073 / ATCC 700928 / UPEC</strain>
    </source>
</reference>
<dbReference type="EC" id="7.1.1.-" evidence="1"/>
<dbReference type="EMBL" id="AE014075">
    <property type="protein sequence ID" value="AAN81277.1"/>
    <property type="molecule type" value="Genomic_DNA"/>
</dbReference>
<dbReference type="RefSeq" id="WP_000118512.1">
    <property type="nucleotide sequence ID" value="NZ_CP051263.1"/>
</dbReference>
<dbReference type="SMR" id="Q8FFK0"/>
<dbReference type="STRING" id="199310.c2823"/>
<dbReference type="KEGG" id="ecc:c2823"/>
<dbReference type="eggNOG" id="COG1005">
    <property type="taxonomic scope" value="Bacteria"/>
</dbReference>
<dbReference type="HOGENOM" id="CLU_015134_0_1_6"/>
<dbReference type="BioCyc" id="ECOL199310:C2823-MONOMER"/>
<dbReference type="Proteomes" id="UP000001410">
    <property type="component" value="Chromosome"/>
</dbReference>
<dbReference type="GO" id="GO:0005886">
    <property type="term" value="C:plasma membrane"/>
    <property type="evidence" value="ECO:0007669"/>
    <property type="project" value="UniProtKB-SubCell"/>
</dbReference>
<dbReference type="GO" id="GO:0003954">
    <property type="term" value="F:NADH dehydrogenase activity"/>
    <property type="evidence" value="ECO:0007669"/>
    <property type="project" value="TreeGrafter"/>
</dbReference>
<dbReference type="GO" id="GO:0016655">
    <property type="term" value="F:oxidoreductase activity, acting on NAD(P)H, quinone or similar compound as acceptor"/>
    <property type="evidence" value="ECO:0007669"/>
    <property type="project" value="UniProtKB-UniRule"/>
</dbReference>
<dbReference type="GO" id="GO:0048038">
    <property type="term" value="F:quinone binding"/>
    <property type="evidence" value="ECO:0007669"/>
    <property type="project" value="UniProtKB-KW"/>
</dbReference>
<dbReference type="GO" id="GO:0009060">
    <property type="term" value="P:aerobic respiration"/>
    <property type="evidence" value="ECO:0007669"/>
    <property type="project" value="TreeGrafter"/>
</dbReference>
<dbReference type="HAMAP" id="MF_01350">
    <property type="entry name" value="NDH1_NuoH"/>
    <property type="match status" value="1"/>
</dbReference>
<dbReference type="InterPro" id="IPR001694">
    <property type="entry name" value="NADH_UbQ_OxRdtase_su1/FPO"/>
</dbReference>
<dbReference type="InterPro" id="IPR018086">
    <property type="entry name" value="NADH_UbQ_OxRdtase_su1_CS"/>
</dbReference>
<dbReference type="NCBIfam" id="NF004740">
    <property type="entry name" value="PRK06076.1-1"/>
    <property type="match status" value="1"/>
</dbReference>
<dbReference type="NCBIfam" id="NF004741">
    <property type="entry name" value="PRK06076.1-2"/>
    <property type="match status" value="1"/>
</dbReference>
<dbReference type="PANTHER" id="PTHR11432">
    <property type="entry name" value="NADH DEHYDROGENASE SUBUNIT 1"/>
    <property type="match status" value="1"/>
</dbReference>
<dbReference type="PANTHER" id="PTHR11432:SF3">
    <property type="entry name" value="NADH-UBIQUINONE OXIDOREDUCTASE CHAIN 1"/>
    <property type="match status" value="1"/>
</dbReference>
<dbReference type="Pfam" id="PF00146">
    <property type="entry name" value="NADHdh"/>
    <property type="match status" value="1"/>
</dbReference>
<dbReference type="PROSITE" id="PS00667">
    <property type="entry name" value="COMPLEX1_ND1_1"/>
    <property type="match status" value="1"/>
</dbReference>
<dbReference type="PROSITE" id="PS00668">
    <property type="entry name" value="COMPLEX1_ND1_2"/>
    <property type="match status" value="1"/>
</dbReference>
<sequence length="325" mass="36205">MSWISPELIEILLTVLKAVVILLVVVTCGAFMSFGERRLLGLFQNRYGPNRVGWGGSLQLVADMIKMFFKEDWIPKFSDRVIFTLAPMIAFTSLLLAFAIVPVSPGWVVADLNIGILFFLMMAGLAVYAVLFAGWSSNNKYSLLGAMRASAQTLSYEVFLGLSLMGVVAQAGSFNMTDIVNSQAHVWNVIPQFFGFITFAIAGVAVCHRHPFDQPEAEQELADGYHIEYSGMKFGLFFVGEYIGIVTISALMVTLFFGGWQGPLLPPFIWFALKTAFFMMMFILIRASLPRPRYDQVMSFGWKICLPLTLINLLVTAAVILWQAQ</sequence>
<proteinExistence type="inferred from homology"/>